<reference key="1">
    <citation type="submission" date="2003-03" db="EMBL/GenBank/DDBJ databases">
        <title>The complete genome sequence of Neisseria gonorrhoeae.</title>
        <authorList>
            <person name="Lewis L.A."/>
            <person name="Gillaspy A.F."/>
            <person name="McLaughlin R.E."/>
            <person name="Gipson M."/>
            <person name="Ducey T.F."/>
            <person name="Ownbey T."/>
            <person name="Hartman K."/>
            <person name="Nydick C."/>
            <person name="Carson M.B."/>
            <person name="Vaughn J."/>
            <person name="Thomson C."/>
            <person name="Song L."/>
            <person name="Lin S."/>
            <person name="Yuan X."/>
            <person name="Najar F."/>
            <person name="Zhan M."/>
            <person name="Ren Q."/>
            <person name="Zhu H."/>
            <person name="Qi S."/>
            <person name="Kenton S.M."/>
            <person name="Lai H."/>
            <person name="White J.D."/>
            <person name="Clifton S."/>
            <person name="Roe B.A."/>
            <person name="Dyer D.W."/>
        </authorList>
    </citation>
    <scope>NUCLEOTIDE SEQUENCE [LARGE SCALE GENOMIC DNA]</scope>
    <source>
        <strain>ATCC 700825 / FA 1090</strain>
    </source>
</reference>
<gene>
    <name evidence="1" type="primary">lpxK</name>
    <name type="ordered locus">NGO_0242</name>
</gene>
<protein>
    <recommendedName>
        <fullName evidence="1">Tetraacyldisaccharide 4'-kinase</fullName>
        <ecNumber evidence="1">2.7.1.130</ecNumber>
    </recommendedName>
    <alternativeName>
        <fullName evidence="1">Lipid A 4'-kinase</fullName>
    </alternativeName>
</protein>
<proteinExistence type="inferred from homology"/>
<name>LPXK_NEIG1</name>
<organism>
    <name type="scientific">Neisseria gonorrhoeae (strain ATCC 700825 / FA 1090)</name>
    <dbReference type="NCBI Taxonomy" id="242231"/>
    <lineage>
        <taxon>Bacteria</taxon>
        <taxon>Pseudomonadati</taxon>
        <taxon>Pseudomonadota</taxon>
        <taxon>Betaproteobacteria</taxon>
        <taxon>Neisseriales</taxon>
        <taxon>Neisseriaceae</taxon>
        <taxon>Neisseria</taxon>
    </lineage>
</organism>
<keyword id="KW-0067">ATP-binding</keyword>
<keyword id="KW-0418">Kinase</keyword>
<keyword id="KW-0441">Lipid A biosynthesis</keyword>
<keyword id="KW-0444">Lipid biosynthesis</keyword>
<keyword id="KW-0443">Lipid metabolism</keyword>
<keyword id="KW-0547">Nucleotide-binding</keyword>
<keyword id="KW-1185">Reference proteome</keyword>
<keyword id="KW-0808">Transferase</keyword>
<comment type="function">
    <text evidence="1">Transfers the gamma-phosphate of ATP to the 4'-position of a tetraacyldisaccharide 1-phosphate intermediate (termed DS-1-P) to form tetraacyldisaccharide 1,4'-bis-phosphate (lipid IVA).</text>
</comment>
<comment type="catalytic activity">
    <reaction evidence="1">
        <text>a lipid A disaccharide + ATP = a lipid IVA + ADP + H(+)</text>
        <dbReference type="Rhea" id="RHEA:67840"/>
        <dbReference type="ChEBI" id="CHEBI:15378"/>
        <dbReference type="ChEBI" id="CHEBI:30616"/>
        <dbReference type="ChEBI" id="CHEBI:176343"/>
        <dbReference type="ChEBI" id="CHEBI:176425"/>
        <dbReference type="ChEBI" id="CHEBI:456216"/>
        <dbReference type="EC" id="2.7.1.130"/>
    </reaction>
</comment>
<comment type="pathway">
    <text evidence="1">Glycolipid biosynthesis; lipid IV(A) biosynthesis; lipid IV(A) from (3R)-3-hydroxytetradecanoyl-[acyl-carrier-protein] and UDP-N-acetyl-alpha-D-glucosamine: step 6/6.</text>
</comment>
<comment type="similarity">
    <text evidence="1">Belongs to the LpxK family.</text>
</comment>
<sequence length="343" mass="37021">MPNFFKFHTVIERHWQKPYPVLSFLLKPLSGLFAKIAAKWRADFLSGKRQSEKLSVPVVVVGNIHAGGTGKTPIAAALVSGLQEKGVKVGIISRGYGRKSKAVYVLNAASRAEDAGDEPLLLFRKTGAPTAVGSSRVEAGRALLAAHPELELIVADDGLQHYALQRDVEIAVFPAADTGRTDLDLLPNGNLREPLSRLESVDAVVVGGRAADGFMPSEHLFGSRIEAGAVYRLNRPSEKLDISTLSGKRVAAVAGIARPQRFFDTLTHMGIRLDQTVALPDHADIFNRDLPPADVVLVTEKDAVKFSDGICTDNVWVLPVCAIIEPDLAEFVLERLEGVPKAV</sequence>
<feature type="chain" id="PRO_0000229965" description="Tetraacyldisaccharide 4'-kinase">
    <location>
        <begin position="1"/>
        <end position="343"/>
    </location>
</feature>
<feature type="binding site" evidence="1">
    <location>
        <begin position="65"/>
        <end position="72"/>
    </location>
    <ligand>
        <name>ATP</name>
        <dbReference type="ChEBI" id="CHEBI:30616"/>
    </ligand>
</feature>
<accession>Q5F9Z2</accession>
<dbReference type="EC" id="2.7.1.130" evidence="1"/>
<dbReference type="EMBL" id="AE004969">
    <property type="protein sequence ID" value="AAW88995.1"/>
    <property type="molecule type" value="Genomic_DNA"/>
</dbReference>
<dbReference type="RefSeq" id="WP_003687587.1">
    <property type="nucleotide sequence ID" value="NC_002946.2"/>
</dbReference>
<dbReference type="RefSeq" id="YP_207407.1">
    <property type="nucleotide sequence ID" value="NC_002946.2"/>
</dbReference>
<dbReference type="SMR" id="Q5F9Z2"/>
<dbReference type="STRING" id="242231.NGO_0242"/>
<dbReference type="GeneID" id="66752577"/>
<dbReference type="KEGG" id="ngo:NGO_0242"/>
<dbReference type="PATRIC" id="fig|242231.10.peg.299"/>
<dbReference type="HOGENOM" id="CLU_038816_2_0_4"/>
<dbReference type="UniPathway" id="UPA00359">
    <property type="reaction ID" value="UER00482"/>
</dbReference>
<dbReference type="Proteomes" id="UP000000535">
    <property type="component" value="Chromosome"/>
</dbReference>
<dbReference type="GO" id="GO:0005886">
    <property type="term" value="C:plasma membrane"/>
    <property type="evidence" value="ECO:0007669"/>
    <property type="project" value="TreeGrafter"/>
</dbReference>
<dbReference type="GO" id="GO:0005524">
    <property type="term" value="F:ATP binding"/>
    <property type="evidence" value="ECO:0007669"/>
    <property type="project" value="UniProtKB-UniRule"/>
</dbReference>
<dbReference type="GO" id="GO:0009029">
    <property type="term" value="F:tetraacyldisaccharide 4'-kinase activity"/>
    <property type="evidence" value="ECO:0007669"/>
    <property type="project" value="UniProtKB-UniRule"/>
</dbReference>
<dbReference type="GO" id="GO:0009245">
    <property type="term" value="P:lipid A biosynthetic process"/>
    <property type="evidence" value="ECO:0007669"/>
    <property type="project" value="UniProtKB-UniRule"/>
</dbReference>
<dbReference type="GO" id="GO:0009244">
    <property type="term" value="P:lipopolysaccharide core region biosynthetic process"/>
    <property type="evidence" value="ECO:0007669"/>
    <property type="project" value="TreeGrafter"/>
</dbReference>
<dbReference type="HAMAP" id="MF_00409">
    <property type="entry name" value="LpxK"/>
    <property type="match status" value="1"/>
</dbReference>
<dbReference type="InterPro" id="IPR003758">
    <property type="entry name" value="LpxK"/>
</dbReference>
<dbReference type="InterPro" id="IPR027417">
    <property type="entry name" value="P-loop_NTPase"/>
</dbReference>
<dbReference type="NCBIfam" id="TIGR00682">
    <property type="entry name" value="lpxK"/>
    <property type="match status" value="1"/>
</dbReference>
<dbReference type="PANTHER" id="PTHR42724">
    <property type="entry name" value="TETRAACYLDISACCHARIDE 4'-KINASE"/>
    <property type="match status" value="1"/>
</dbReference>
<dbReference type="PANTHER" id="PTHR42724:SF1">
    <property type="entry name" value="TETRAACYLDISACCHARIDE 4'-KINASE, MITOCHONDRIAL-RELATED"/>
    <property type="match status" value="1"/>
</dbReference>
<dbReference type="Pfam" id="PF02606">
    <property type="entry name" value="LpxK"/>
    <property type="match status" value="1"/>
</dbReference>
<dbReference type="SUPFAM" id="SSF52540">
    <property type="entry name" value="P-loop containing nucleoside triphosphate hydrolases"/>
    <property type="match status" value="1"/>
</dbReference>
<evidence type="ECO:0000255" key="1">
    <source>
        <dbReference type="HAMAP-Rule" id="MF_00409"/>
    </source>
</evidence>